<name>SYK_LEPBL</name>
<feature type="chain" id="PRO_1000012887" description="Lysine--tRNA ligase">
    <location>
        <begin position="1"/>
        <end position="495"/>
    </location>
</feature>
<feature type="binding site" evidence="1">
    <location>
        <position position="406"/>
    </location>
    <ligand>
        <name>Mg(2+)</name>
        <dbReference type="ChEBI" id="CHEBI:18420"/>
        <label>1</label>
    </ligand>
</feature>
<feature type="binding site" evidence="1">
    <location>
        <position position="413"/>
    </location>
    <ligand>
        <name>Mg(2+)</name>
        <dbReference type="ChEBI" id="CHEBI:18420"/>
        <label>1</label>
    </ligand>
</feature>
<feature type="binding site" evidence="1">
    <location>
        <position position="413"/>
    </location>
    <ligand>
        <name>Mg(2+)</name>
        <dbReference type="ChEBI" id="CHEBI:18420"/>
        <label>2</label>
    </ligand>
</feature>
<organism>
    <name type="scientific">Leptospira borgpetersenii serovar Hardjo-bovis (strain L550)</name>
    <dbReference type="NCBI Taxonomy" id="355276"/>
    <lineage>
        <taxon>Bacteria</taxon>
        <taxon>Pseudomonadati</taxon>
        <taxon>Spirochaetota</taxon>
        <taxon>Spirochaetia</taxon>
        <taxon>Leptospirales</taxon>
        <taxon>Leptospiraceae</taxon>
        <taxon>Leptospira</taxon>
    </lineage>
</organism>
<dbReference type="EC" id="6.1.1.6" evidence="1"/>
<dbReference type="EMBL" id="CP000348">
    <property type="protein sequence ID" value="ABJ79194.1"/>
    <property type="molecule type" value="Genomic_DNA"/>
</dbReference>
<dbReference type="RefSeq" id="WP_011670315.1">
    <property type="nucleotide sequence ID" value="NC_008508.1"/>
</dbReference>
<dbReference type="SMR" id="Q050Q1"/>
<dbReference type="KEGG" id="lbl:LBL_1747"/>
<dbReference type="HOGENOM" id="CLU_008255_6_0_12"/>
<dbReference type="GO" id="GO:0005829">
    <property type="term" value="C:cytosol"/>
    <property type="evidence" value="ECO:0007669"/>
    <property type="project" value="TreeGrafter"/>
</dbReference>
<dbReference type="GO" id="GO:0005524">
    <property type="term" value="F:ATP binding"/>
    <property type="evidence" value="ECO:0007669"/>
    <property type="project" value="UniProtKB-UniRule"/>
</dbReference>
<dbReference type="GO" id="GO:0004824">
    <property type="term" value="F:lysine-tRNA ligase activity"/>
    <property type="evidence" value="ECO:0007669"/>
    <property type="project" value="UniProtKB-UniRule"/>
</dbReference>
<dbReference type="GO" id="GO:0000287">
    <property type="term" value="F:magnesium ion binding"/>
    <property type="evidence" value="ECO:0007669"/>
    <property type="project" value="UniProtKB-UniRule"/>
</dbReference>
<dbReference type="GO" id="GO:0000049">
    <property type="term" value="F:tRNA binding"/>
    <property type="evidence" value="ECO:0007669"/>
    <property type="project" value="TreeGrafter"/>
</dbReference>
<dbReference type="GO" id="GO:0006430">
    <property type="term" value="P:lysyl-tRNA aminoacylation"/>
    <property type="evidence" value="ECO:0007669"/>
    <property type="project" value="UniProtKB-UniRule"/>
</dbReference>
<dbReference type="CDD" id="cd00775">
    <property type="entry name" value="LysRS_core"/>
    <property type="match status" value="1"/>
</dbReference>
<dbReference type="CDD" id="cd04322">
    <property type="entry name" value="LysRS_N"/>
    <property type="match status" value="1"/>
</dbReference>
<dbReference type="FunFam" id="2.40.50.140:FF:000024">
    <property type="entry name" value="Lysine--tRNA ligase"/>
    <property type="match status" value="1"/>
</dbReference>
<dbReference type="FunFam" id="3.30.930.10:FF:000001">
    <property type="entry name" value="Lysine--tRNA ligase"/>
    <property type="match status" value="1"/>
</dbReference>
<dbReference type="Gene3D" id="3.30.930.10">
    <property type="entry name" value="Bira Bifunctional Protein, Domain 2"/>
    <property type="match status" value="1"/>
</dbReference>
<dbReference type="Gene3D" id="2.40.50.140">
    <property type="entry name" value="Nucleic acid-binding proteins"/>
    <property type="match status" value="1"/>
</dbReference>
<dbReference type="HAMAP" id="MF_00252">
    <property type="entry name" value="Lys_tRNA_synth_class2"/>
    <property type="match status" value="1"/>
</dbReference>
<dbReference type="InterPro" id="IPR004364">
    <property type="entry name" value="Aa-tRNA-synt_II"/>
</dbReference>
<dbReference type="InterPro" id="IPR006195">
    <property type="entry name" value="aa-tRNA-synth_II"/>
</dbReference>
<dbReference type="InterPro" id="IPR045864">
    <property type="entry name" value="aa-tRNA-synth_II/BPL/LPL"/>
</dbReference>
<dbReference type="InterPro" id="IPR002313">
    <property type="entry name" value="Lys-tRNA-ligase_II"/>
</dbReference>
<dbReference type="InterPro" id="IPR044136">
    <property type="entry name" value="Lys-tRNA-ligase_II_N"/>
</dbReference>
<dbReference type="InterPro" id="IPR018149">
    <property type="entry name" value="Lys-tRNA-synth_II_C"/>
</dbReference>
<dbReference type="InterPro" id="IPR012340">
    <property type="entry name" value="NA-bd_OB-fold"/>
</dbReference>
<dbReference type="InterPro" id="IPR004365">
    <property type="entry name" value="NA-bd_OB_tRNA"/>
</dbReference>
<dbReference type="NCBIfam" id="TIGR00499">
    <property type="entry name" value="lysS_bact"/>
    <property type="match status" value="1"/>
</dbReference>
<dbReference type="NCBIfam" id="NF001756">
    <property type="entry name" value="PRK00484.1"/>
    <property type="match status" value="1"/>
</dbReference>
<dbReference type="PANTHER" id="PTHR42918:SF15">
    <property type="entry name" value="LYSINE--TRNA LIGASE, CHLOROPLASTIC_MITOCHONDRIAL"/>
    <property type="match status" value="1"/>
</dbReference>
<dbReference type="PANTHER" id="PTHR42918">
    <property type="entry name" value="LYSYL-TRNA SYNTHETASE"/>
    <property type="match status" value="1"/>
</dbReference>
<dbReference type="Pfam" id="PF00152">
    <property type="entry name" value="tRNA-synt_2"/>
    <property type="match status" value="1"/>
</dbReference>
<dbReference type="Pfam" id="PF01336">
    <property type="entry name" value="tRNA_anti-codon"/>
    <property type="match status" value="1"/>
</dbReference>
<dbReference type="PRINTS" id="PR00982">
    <property type="entry name" value="TRNASYNTHLYS"/>
</dbReference>
<dbReference type="SUPFAM" id="SSF55681">
    <property type="entry name" value="Class II aaRS and biotin synthetases"/>
    <property type="match status" value="1"/>
</dbReference>
<dbReference type="SUPFAM" id="SSF50249">
    <property type="entry name" value="Nucleic acid-binding proteins"/>
    <property type="match status" value="1"/>
</dbReference>
<dbReference type="PROSITE" id="PS50862">
    <property type="entry name" value="AA_TRNA_LIGASE_II"/>
    <property type="match status" value="1"/>
</dbReference>
<sequence>MLDSNELIQQRIQKIEDLKNQGINPYPVRFFPDSKSKDIVEKFEKDPTGPETKFKLGGRLHSKRVMGKASFAHLKDSTGIIQLYATRDDLGEISYSIFKSLDLGDIIGLEGYLFKTQKGEVTLHVTSVELLAKCIRPLPVVKEKDGVIYDAFADVEQRYRMRYVDLVVNDHVRDTFITRSRIVSEIRNFLTNEGFLEVETPMMQPIAGGAAARPFVTHHNTLDMQLFLRIAPELYLKRLIVGGMDRVFELNRNFRNEGISTKHNPEFTMMEAYIAFADMNTMLDLTERLITHLAQKIHGALKIQYGKDLIDLSPPWRKITYTDIIKEYSGIDFSLITSLEEAKKKASELNVDVSKCNTIWKVADEVFSEKAEPNLIQPVFIIDYPKELSPLAKSNPDKPGYVERFEPYVAGREIGNAFTELNDPFDQKERFEDQVQQREAGDDEAFMMDEDYIRALEYGMPPTGGLGIGIDRLVMLLTDSHSIRDTILFPLMRPE</sequence>
<reference key="1">
    <citation type="journal article" date="2006" name="Proc. Natl. Acad. Sci. U.S.A.">
        <title>Genome reduction in Leptospira borgpetersenii reflects limited transmission potential.</title>
        <authorList>
            <person name="Bulach D.M."/>
            <person name="Zuerner R.L."/>
            <person name="Wilson P."/>
            <person name="Seemann T."/>
            <person name="McGrath A."/>
            <person name="Cullen P.A."/>
            <person name="Davis J."/>
            <person name="Johnson M."/>
            <person name="Kuczek E."/>
            <person name="Alt D.P."/>
            <person name="Peterson-Burch B."/>
            <person name="Coppel R.L."/>
            <person name="Rood J.I."/>
            <person name="Davies J.K."/>
            <person name="Adler B."/>
        </authorList>
    </citation>
    <scope>NUCLEOTIDE SEQUENCE [LARGE SCALE GENOMIC DNA]</scope>
    <source>
        <strain>L550</strain>
    </source>
</reference>
<protein>
    <recommendedName>
        <fullName evidence="1">Lysine--tRNA ligase</fullName>
        <ecNumber evidence="1">6.1.1.6</ecNumber>
    </recommendedName>
    <alternativeName>
        <fullName evidence="1">Lysyl-tRNA synthetase</fullName>
        <shortName evidence="1">LysRS</shortName>
    </alternativeName>
</protein>
<comment type="catalytic activity">
    <reaction evidence="1">
        <text>tRNA(Lys) + L-lysine + ATP = L-lysyl-tRNA(Lys) + AMP + diphosphate</text>
        <dbReference type="Rhea" id="RHEA:20792"/>
        <dbReference type="Rhea" id="RHEA-COMP:9696"/>
        <dbReference type="Rhea" id="RHEA-COMP:9697"/>
        <dbReference type="ChEBI" id="CHEBI:30616"/>
        <dbReference type="ChEBI" id="CHEBI:32551"/>
        <dbReference type="ChEBI" id="CHEBI:33019"/>
        <dbReference type="ChEBI" id="CHEBI:78442"/>
        <dbReference type="ChEBI" id="CHEBI:78529"/>
        <dbReference type="ChEBI" id="CHEBI:456215"/>
        <dbReference type="EC" id="6.1.1.6"/>
    </reaction>
</comment>
<comment type="cofactor">
    <cofactor evidence="1">
        <name>Mg(2+)</name>
        <dbReference type="ChEBI" id="CHEBI:18420"/>
    </cofactor>
    <text evidence="1">Binds 3 Mg(2+) ions per subunit.</text>
</comment>
<comment type="subunit">
    <text evidence="1">Homodimer.</text>
</comment>
<comment type="subcellular location">
    <subcellularLocation>
        <location evidence="1">Cytoplasm</location>
    </subcellularLocation>
</comment>
<comment type="similarity">
    <text evidence="1">Belongs to the class-II aminoacyl-tRNA synthetase family.</text>
</comment>
<proteinExistence type="inferred from homology"/>
<evidence type="ECO:0000255" key="1">
    <source>
        <dbReference type="HAMAP-Rule" id="MF_00252"/>
    </source>
</evidence>
<keyword id="KW-0030">Aminoacyl-tRNA synthetase</keyword>
<keyword id="KW-0067">ATP-binding</keyword>
<keyword id="KW-0963">Cytoplasm</keyword>
<keyword id="KW-0436">Ligase</keyword>
<keyword id="KW-0460">Magnesium</keyword>
<keyword id="KW-0479">Metal-binding</keyword>
<keyword id="KW-0547">Nucleotide-binding</keyword>
<keyword id="KW-0648">Protein biosynthesis</keyword>
<accession>Q050Q1</accession>
<gene>
    <name evidence="1" type="primary">lysS</name>
    <name type="ordered locus">LBL_1747</name>
</gene>